<organism>
    <name type="scientific">Bacillus subtilis (strain 168)</name>
    <dbReference type="NCBI Taxonomy" id="224308"/>
    <lineage>
        <taxon>Bacteria</taxon>
        <taxon>Bacillati</taxon>
        <taxon>Bacillota</taxon>
        <taxon>Bacilli</taxon>
        <taxon>Bacillales</taxon>
        <taxon>Bacillaceae</taxon>
        <taxon>Bacillus</taxon>
    </lineage>
</organism>
<comment type="function">
    <text evidence="1">Part of the ABC transporter complex RbsABC involved in ribose import. Probably responsible for the translocation of the substrate across the membrane.</text>
</comment>
<comment type="subunit">
    <text evidence="1">The complex is composed of an ATP-binding protein (RbsA), two transmembrane proteins (RbsC) and a solute-binding protein (RbsB).</text>
</comment>
<comment type="subcellular location">
    <subcellularLocation>
        <location evidence="3">Cell membrane</location>
        <topology evidence="2">Multi-pass membrane protein</topology>
    </subcellularLocation>
</comment>
<comment type="similarity">
    <text evidence="3">Belongs to the binding-protein-dependent transport system permease family. AraH/RbsC subfamily.</text>
</comment>
<keyword id="KW-1003">Cell membrane</keyword>
<keyword id="KW-0472">Membrane</keyword>
<keyword id="KW-1185">Reference proteome</keyword>
<keyword id="KW-0762">Sugar transport</keyword>
<keyword id="KW-0812">Transmembrane</keyword>
<keyword id="KW-1133">Transmembrane helix</keyword>
<keyword id="KW-0813">Transport</keyword>
<protein>
    <recommendedName>
        <fullName evidence="1">Ribose import permease protein RbsC</fullName>
    </recommendedName>
</protein>
<feature type="chain" id="PRO_0000060222" description="Ribose import permease protein RbsC">
    <location>
        <begin position="1"/>
        <end position="322"/>
    </location>
</feature>
<feature type="transmembrane region" description="Helical" evidence="2">
    <location>
        <begin position="22"/>
        <end position="42"/>
    </location>
</feature>
<feature type="transmembrane region" description="Helical" evidence="2">
    <location>
        <begin position="48"/>
        <end position="70"/>
    </location>
</feature>
<feature type="transmembrane region" description="Helical" evidence="2">
    <location>
        <begin position="77"/>
        <end position="94"/>
    </location>
</feature>
<feature type="transmembrane region" description="Helical" evidence="2">
    <location>
        <begin position="101"/>
        <end position="121"/>
    </location>
</feature>
<feature type="transmembrane region" description="Helical" evidence="2">
    <location>
        <begin position="126"/>
        <end position="146"/>
    </location>
</feature>
<feature type="transmembrane region" description="Helical" evidence="2">
    <location>
        <begin position="169"/>
        <end position="189"/>
    </location>
</feature>
<feature type="transmembrane region" description="Helical" evidence="2">
    <location>
        <begin position="219"/>
        <end position="239"/>
    </location>
</feature>
<feature type="transmembrane region" description="Helical" evidence="2">
    <location>
        <begin position="294"/>
        <end position="314"/>
    </location>
</feature>
<feature type="sequence conflict" description="In Ref. 1; CAA81052." evidence="3" ref="1">
    <original>H</original>
    <variation>R</variation>
    <location>
        <position position="14"/>
    </location>
</feature>
<feature type="sequence conflict" description="In Ref. 1; CAA81052." evidence="3" ref="1">
    <original>A</original>
    <variation>G</variation>
    <location>
        <position position="134"/>
    </location>
</feature>
<feature type="sequence conflict" description="In Ref. 1; CAA81052." evidence="3" ref="1">
    <original>R</original>
    <variation>RL</variation>
    <location>
        <position position="166"/>
    </location>
</feature>
<feature type="sequence conflict" description="In Ref. 1; CAA81052." evidence="3" ref="1">
    <original>A</original>
    <variation>R</variation>
    <location>
        <position position="257"/>
    </location>
</feature>
<feature type="sequence conflict" description="In Ref. 1; CAA81052." evidence="3" ref="1">
    <original>R</original>
    <variation>P</variation>
    <location>
        <position position="274"/>
    </location>
</feature>
<name>RBSC_BACSU</name>
<proteinExistence type="inferred from homology"/>
<sequence length="322" mass="33788">MKTEQLQTEQKRIHFDGVMQKLGPFLGLFILVIIVSILNPSFLEPLNILNLLRQVAINGLIAFGMTFVILTGGIDLSVGAILALSSALVAGMIVSGVDPVLAIILGCIIGAVLGMINGLLITKGKMAPFIATLATMTVFRGLTLVYTDGNPITGLGTNYGFQMFGRGYFLGIPVPAITMVLAFVILWVLLHKTPFGRRTYAIGGNEKAALISGIKVTRVKVMIYSLAGLLSALAGAILTSRLHSAQPTAGESYELDAIAAVVLGGTSLSGGRGRIVGTLIGVLIIGTLNNGLNLLGVSSFYQLVVKGIVILIAVLLDRKKSA</sequence>
<evidence type="ECO:0000250" key="1">
    <source>
        <dbReference type="UniProtKB" id="P0AGI1"/>
    </source>
</evidence>
<evidence type="ECO:0000255" key="2"/>
<evidence type="ECO:0000305" key="3"/>
<accession>P36948</accession>
<accession>P96731</accession>
<reference key="1">
    <citation type="journal article" date="1994" name="Microbiology">
        <title>Analysis of a ribose transport operon from Bacillus subtilis.</title>
        <authorList>
            <person name="Woodson K."/>
            <person name="Devine K.M."/>
        </authorList>
    </citation>
    <scope>NUCLEOTIDE SEQUENCE [GENOMIC DNA]</scope>
    <source>
        <strain>168</strain>
    </source>
</reference>
<reference key="2">
    <citation type="journal article" date="1997" name="Microbiology">
        <title>The Bacillus subtilis genome from gerBC (311 degrees) to licR (334 degrees).</title>
        <authorList>
            <person name="Presecan E."/>
            <person name="Moszer I."/>
            <person name="Boursier L."/>
            <person name="Cruz Ramos H."/>
            <person name="De La Fuente V."/>
            <person name="Hullo M.-F."/>
            <person name="Lelong C."/>
            <person name="Schleich S."/>
            <person name="Sekowska A."/>
            <person name="Song B.H."/>
            <person name="Villani G."/>
            <person name="Kunst F."/>
            <person name="Danchin A."/>
            <person name="Glaser P."/>
        </authorList>
    </citation>
    <scope>NUCLEOTIDE SEQUENCE [GENOMIC DNA]</scope>
    <source>
        <strain>168</strain>
    </source>
</reference>
<reference key="3">
    <citation type="journal article" date="1997" name="Nature">
        <title>The complete genome sequence of the Gram-positive bacterium Bacillus subtilis.</title>
        <authorList>
            <person name="Kunst F."/>
            <person name="Ogasawara N."/>
            <person name="Moszer I."/>
            <person name="Albertini A.M."/>
            <person name="Alloni G."/>
            <person name="Azevedo V."/>
            <person name="Bertero M.G."/>
            <person name="Bessieres P."/>
            <person name="Bolotin A."/>
            <person name="Borchert S."/>
            <person name="Borriss R."/>
            <person name="Boursier L."/>
            <person name="Brans A."/>
            <person name="Braun M."/>
            <person name="Brignell S.C."/>
            <person name="Bron S."/>
            <person name="Brouillet S."/>
            <person name="Bruschi C.V."/>
            <person name="Caldwell B."/>
            <person name="Capuano V."/>
            <person name="Carter N.M."/>
            <person name="Choi S.-K."/>
            <person name="Codani J.-J."/>
            <person name="Connerton I.F."/>
            <person name="Cummings N.J."/>
            <person name="Daniel R.A."/>
            <person name="Denizot F."/>
            <person name="Devine K.M."/>
            <person name="Duesterhoeft A."/>
            <person name="Ehrlich S.D."/>
            <person name="Emmerson P.T."/>
            <person name="Entian K.-D."/>
            <person name="Errington J."/>
            <person name="Fabret C."/>
            <person name="Ferrari E."/>
            <person name="Foulger D."/>
            <person name="Fritz C."/>
            <person name="Fujita M."/>
            <person name="Fujita Y."/>
            <person name="Fuma S."/>
            <person name="Galizzi A."/>
            <person name="Galleron N."/>
            <person name="Ghim S.-Y."/>
            <person name="Glaser P."/>
            <person name="Goffeau A."/>
            <person name="Golightly E.J."/>
            <person name="Grandi G."/>
            <person name="Guiseppi G."/>
            <person name="Guy B.J."/>
            <person name="Haga K."/>
            <person name="Haiech J."/>
            <person name="Harwood C.R."/>
            <person name="Henaut A."/>
            <person name="Hilbert H."/>
            <person name="Holsappel S."/>
            <person name="Hosono S."/>
            <person name="Hullo M.-F."/>
            <person name="Itaya M."/>
            <person name="Jones L.-M."/>
            <person name="Joris B."/>
            <person name="Karamata D."/>
            <person name="Kasahara Y."/>
            <person name="Klaerr-Blanchard M."/>
            <person name="Klein C."/>
            <person name="Kobayashi Y."/>
            <person name="Koetter P."/>
            <person name="Koningstein G."/>
            <person name="Krogh S."/>
            <person name="Kumano M."/>
            <person name="Kurita K."/>
            <person name="Lapidus A."/>
            <person name="Lardinois S."/>
            <person name="Lauber J."/>
            <person name="Lazarevic V."/>
            <person name="Lee S.-M."/>
            <person name="Levine A."/>
            <person name="Liu H."/>
            <person name="Masuda S."/>
            <person name="Mauel C."/>
            <person name="Medigue C."/>
            <person name="Medina N."/>
            <person name="Mellado R.P."/>
            <person name="Mizuno M."/>
            <person name="Moestl D."/>
            <person name="Nakai S."/>
            <person name="Noback M."/>
            <person name="Noone D."/>
            <person name="O'Reilly M."/>
            <person name="Ogawa K."/>
            <person name="Ogiwara A."/>
            <person name="Oudega B."/>
            <person name="Park S.-H."/>
            <person name="Parro V."/>
            <person name="Pohl T.M."/>
            <person name="Portetelle D."/>
            <person name="Porwollik S."/>
            <person name="Prescott A.M."/>
            <person name="Presecan E."/>
            <person name="Pujic P."/>
            <person name="Purnelle B."/>
            <person name="Rapoport G."/>
            <person name="Rey M."/>
            <person name="Reynolds S."/>
            <person name="Rieger M."/>
            <person name="Rivolta C."/>
            <person name="Rocha E."/>
            <person name="Roche B."/>
            <person name="Rose M."/>
            <person name="Sadaie Y."/>
            <person name="Sato T."/>
            <person name="Scanlan E."/>
            <person name="Schleich S."/>
            <person name="Schroeter R."/>
            <person name="Scoffone F."/>
            <person name="Sekiguchi J."/>
            <person name="Sekowska A."/>
            <person name="Seror S.J."/>
            <person name="Serror P."/>
            <person name="Shin B.-S."/>
            <person name="Soldo B."/>
            <person name="Sorokin A."/>
            <person name="Tacconi E."/>
            <person name="Takagi T."/>
            <person name="Takahashi H."/>
            <person name="Takemaru K."/>
            <person name="Takeuchi M."/>
            <person name="Tamakoshi A."/>
            <person name="Tanaka T."/>
            <person name="Terpstra P."/>
            <person name="Tognoni A."/>
            <person name="Tosato V."/>
            <person name="Uchiyama S."/>
            <person name="Vandenbol M."/>
            <person name="Vannier F."/>
            <person name="Vassarotti A."/>
            <person name="Viari A."/>
            <person name="Wambutt R."/>
            <person name="Wedler E."/>
            <person name="Wedler H."/>
            <person name="Weitzenegger T."/>
            <person name="Winters P."/>
            <person name="Wipat A."/>
            <person name="Yamamoto H."/>
            <person name="Yamane K."/>
            <person name="Yasumoto K."/>
            <person name="Yata K."/>
            <person name="Yoshida K."/>
            <person name="Yoshikawa H.-F."/>
            <person name="Zumstein E."/>
            <person name="Yoshikawa H."/>
            <person name="Danchin A."/>
        </authorList>
    </citation>
    <scope>NUCLEOTIDE SEQUENCE [LARGE SCALE GENOMIC DNA]</scope>
    <source>
        <strain>168</strain>
    </source>
</reference>
<dbReference type="EMBL" id="Z25798">
    <property type="protein sequence ID" value="CAA81052.1"/>
    <property type="molecule type" value="Genomic_DNA"/>
</dbReference>
<dbReference type="EMBL" id="Z92953">
    <property type="protein sequence ID" value="CAB07462.1"/>
    <property type="molecule type" value="Genomic_DNA"/>
</dbReference>
<dbReference type="EMBL" id="AL009126">
    <property type="protein sequence ID" value="CAB15612.1"/>
    <property type="molecule type" value="Genomic_DNA"/>
</dbReference>
<dbReference type="PIR" id="B69690">
    <property type="entry name" value="B69690"/>
</dbReference>
<dbReference type="RefSeq" id="NP_391476.1">
    <property type="nucleotide sequence ID" value="NC_000964.3"/>
</dbReference>
<dbReference type="RefSeq" id="WP_009968282.1">
    <property type="nucleotide sequence ID" value="NZ_OZ025638.1"/>
</dbReference>
<dbReference type="FunCoup" id="P36948">
    <property type="interactions" value="340"/>
</dbReference>
<dbReference type="STRING" id="224308.BSU35950"/>
<dbReference type="jPOST" id="P36948"/>
<dbReference type="PaxDb" id="224308-BSU35950"/>
<dbReference type="EnsemblBacteria" id="CAB15612">
    <property type="protein sequence ID" value="CAB15612"/>
    <property type="gene ID" value="BSU_35950"/>
</dbReference>
<dbReference type="GeneID" id="936841"/>
<dbReference type="KEGG" id="bsu:BSU35950"/>
<dbReference type="PATRIC" id="fig|224308.179.peg.3892"/>
<dbReference type="eggNOG" id="COG1172">
    <property type="taxonomic scope" value="Bacteria"/>
</dbReference>
<dbReference type="InParanoid" id="P36948"/>
<dbReference type="OrthoDB" id="9784538at2"/>
<dbReference type="PhylomeDB" id="P36948"/>
<dbReference type="BioCyc" id="BSUB:BSU35950-MONOMER"/>
<dbReference type="Proteomes" id="UP000001570">
    <property type="component" value="Chromosome"/>
</dbReference>
<dbReference type="GO" id="GO:0005886">
    <property type="term" value="C:plasma membrane"/>
    <property type="evidence" value="ECO:0000318"/>
    <property type="project" value="GO_Central"/>
</dbReference>
<dbReference type="GO" id="GO:0022857">
    <property type="term" value="F:transmembrane transporter activity"/>
    <property type="evidence" value="ECO:0007669"/>
    <property type="project" value="InterPro"/>
</dbReference>
<dbReference type="CDD" id="cd06579">
    <property type="entry name" value="TM_PBP1_transp_AraH_like"/>
    <property type="match status" value="1"/>
</dbReference>
<dbReference type="InterPro" id="IPR001851">
    <property type="entry name" value="ABC_transp_permease"/>
</dbReference>
<dbReference type="PANTHER" id="PTHR32196">
    <property type="entry name" value="ABC TRANSPORTER PERMEASE PROTEIN YPHD-RELATED-RELATED"/>
    <property type="match status" value="1"/>
</dbReference>
<dbReference type="PANTHER" id="PTHR32196:SF72">
    <property type="entry name" value="RIBOSE IMPORT PERMEASE PROTEIN RBSC"/>
    <property type="match status" value="1"/>
</dbReference>
<dbReference type="Pfam" id="PF02653">
    <property type="entry name" value="BPD_transp_2"/>
    <property type="match status" value="1"/>
</dbReference>
<gene>
    <name type="primary">rbsC</name>
    <name type="ordered locus">BSU35950</name>
</gene>